<organism>
    <name type="scientific">Escherichia coli (strain ATCC 8739 / DSM 1576 / NBRC 3972 / NCIMB 8545 / WDCM 00012 / Crooks)</name>
    <dbReference type="NCBI Taxonomy" id="481805"/>
    <lineage>
        <taxon>Bacteria</taxon>
        <taxon>Pseudomonadati</taxon>
        <taxon>Pseudomonadota</taxon>
        <taxon>Gammaproteobacteria</taxon>
        <taxon>Enterobacterales</taxon>
        <taxon>Enterobacteriaceae</taxon>
        <taxon>Escherichia</taxon>
    </lineage>
</organism>
<gene>
    <name evidence="1" type="primary">ves</name>
    <name type="ordered locus">EcolC_1890</name>
</gene>
<protein>
    <recommendedName>
        <fullName evidence="1">Protein Ves</fullName>
    </recommendedName>
</protein>
<name>VES_ECOLC</name>
<feature type="chain" id="PRO_1000087976" description="Protein Ves">
    <location>
        <begin position="1"/>
        <end position="191"/>
    </location>
</feature>
<evidence type="ECO:0000255" key="1">
    <source>
        <dbReference type="HAMAP-Rule" id="MF_01591"/>
    </source>
</evidence>
<sequence>MEYFDMRKMSVNLWRNAAGETREICTFPPAKRDFYWRASIASIAANGEFSLFPGMERIVTLLEGGEMFLESTDRFNHTLKPLQPFAFAADQVVKAKLTEGQMSMDFNIMTRLDVCKAKVRIAERTFTTFGSRGGVVFVINGAWQLGDKLLTTDQGACWFDGRHTLRLLQPQGKLLFSEINWLAGHSPDQVQ</sequence>
<accession>B1IPI8</accession>
<reference key="1">
    <citation type="submission" date="2008-02" db="EMBL/GenBank/DDBJ databases">
        <title>Complete sequence of Escherichia coli C str. ATCC 8739.</title>
        <authorList>
            <person name="Copeland A."/>
            <person name="Lucas S."/>
            <person name="Lapidus A."/>
            <person name="Glavina del Rio T."/>
            <person name="Dalin E."/>
            <person name="Tice H."/>
            <person name="Bruce D."/>
            <person name="Goodwin L."/>
            <person name="Pitluck S."/>
            <person name="Kiss H."/>
            <person name="Brettin T."/>
            <person name="Detter J.C."/>
            <person name="Han C."/>
            <person name="Kuske C.R."/>
            <person name="Schmutz J."/>
            <person name="Larimer F."/>
            <person name="Land M."/>
            <person name="Hauser L."/>
            <person name="Kyrpides N."/>
            <person name="Mikhailova N."/>
            <person name="Ingram L."/>
            <person name="Richardson P."/>
        </authorList>
    </citation>
    <scope>NUCLEOTIDE SEQUENCE [LARGE SCALE GENOMIC DNA]</scope>
    <source>
        <strain>ATCC 8739 / DSM 1576 / NBRC 3972 / NCIMB 8545 / WDCM 00012 / Crooks</strain>
    </source>
</reference>
<proteinExistence type="inferred from homology"/>
<comment type="similarity">
    <text evidence="1">Belongs to the Ves family.</text>
</comment>
<dbReference type="EMBL" id="CP000946">
    <property type="protein sequence ID" value="ACA77538.1"/>
    <property type="molecule type" value="Genomic_DNA"/>
</dbReference>
<dbReference type="RefSeq" id="WP_001295481.1">
    <property type="nucleotide sequence ID" value="NZ_MTFT01000006.1"/>
</dbReference>
<dbReference type="SMR" id="B1IPI8"/>
<dbReference type="KEGG" id="ecl:EcolC_1890"/>
<dbReference type="HOGENOM" id="CLU_090931_5_0_6"/>
<dbReference type="CDD" id="cd20293">
    <property type="entry name" value="cupin_HutD_N"/>
    <property type="match status" value="1"/>
</dbReference>
<dbReference type="Gene3D" id="2.60.120.10">
    <property type="entry name" value="Jelly Rolls"/>
    <property type="match status" value="1"/>
</dbReference>
<dbReference type="HAMAP" id="MF_01591">
    <property type="entry name" value="Ves"/>
    <property type="match status" value="1"/>
</dbReference>
<dbReference type="InterPro" id="IPR014710">
    <property type="entry name" value="RmlC-like_jellyroll"/>
</dbReference>
<dbReference type="InterPro" id="IPR011051">
    <property type="entry name" value="RmlC_Cupin_sf"/>
</dbReference>
<dbReference type="InterPro" id="IPR010282">
    <property type="entry name" value="Uncharacterised_HutD/Ves"/>
</dbReference>
<dbReference type="InterPro" id="IPR023482">
    <property type="entry name" value="Uncharacterised_Ves"/>
</dbReference>
<dbReference type="NCBIfam" id="NF008488">
    <property type="entry name" value="PRK11396.1"/>
    <property type="match status" value="1"/>
</dbReference>
<dbReference type="PANTHER" id="PTHR37943">
    <property type="entry name" value="PROTEIN VES"/>
    <property type="match status" value="1"/>
</dbReference>
<dbReference type="PANTHER" id="PTHR37943:SF1">
    <property type="entry name" value="PROTEIN VES"/>
    <property type="match status" value="1"/>
</dbReference>
<dbReference type="Pfam" id="PF05962">
    <property type="entry name" value="HutD"/>
    <property type="match status" value="1"/>
</dbReference>
<dbReference type="SUPFAM" id="SSF51182">
    <property type="entry name" value="RmlC-like cupins"/>
    <property type="match status" value="1"/>
</dbReference>